<accession>Q2G7F1</accession>
<gene>
    <name evidence="1" type="primary">ispE</name>
    <name type="ordered locus">Saro_1782</name>
</gene>
<evidence type="ECO:0000255" key="1">
    <source>
        <dbReference type="HAMAP-Rule" id="MF_00061"/>
    </source>
</evidence>
<proteinExistence type="inferred from homology"/>
<reference key="1">
    <citation type="submission" date="2006-01" db="EMBL/GenBank/DDBJ databases">
        <title>Complete sequence of Novosphingobium aromaticivorans DSM 12444.</title>
        <authorList>
            <consortium name="US DOE Joint Genome Institute"/>
            <person name="Copeland A."/>
            <person name="Lucas S."/>
            <person name="Lapidus A."/>
            <person name="Barry K."/>
            <person name="Detter J.C."/>
            <person name="Glavina T."/>
            <person name="Hammon N."/>
            <person name="Israni S."/>
            <person name="Pitluck S."/>
            <person name="Chain P."/>
            <person name="Malfatti S."/>
            <person name="Shin M."/>
            <person name="Vergez L."/>
            <person name="Schmutz J."/>
            <person name="Larimer F."/>
            <person name="Land M."/>
            <person name="Kyrpides N."/>
            <person name="Ivanova N."/>
            <person name="Fredrickson J."/>
            <person name="Balkwill D."/>
            <person name="Romine M.F."/>
            <person name="Richardson P."/>
        </authorList>
    </citation>
    <scope>NUCLEOTIDE SEQUENCE [LARGE SCALE GENOMIC DNA]</scope>
    <source>
        <strain>ATCC 700278 / DSM 12444 / CCUG 56034 / CIP 105152 / NBRC 16084 / F199</strain>
    </source>
</reference>
<organism>
    <name type="scientific">Novosphingobium aromaticivorans (strain ATCC 700278 / DSM 12444 / CCUG 56034 / CIP 105152 / NBRC 16084 / F199)</name>
    <dbReference type="NCBI Taxonomy" id="279238"/>
    <lineage>
        <taxon>Bacteria</taxon>
        <taxon>Pseudomonadati</taxon>
        <taxon>Pseudomonadota</taxon>
        <taxon>Alphaproteobacteria</taxon>
        <taxon>Sphingomonadales</taxon>
        <taxon>Sphingomonadaceae</taxon>
        <taxon>Novosphingobium</taxon>
    </lineage>
</organism>
<keyword id="KW-0067">ATP-binding</keyword>
<keyword id="KW-0414">Isoprene biosynthesis</keyword>
<keyword id="KW-0418">Kinase</keyword>
<keyword id="KW-0547">Nucleotide-binding</keyword>
<keyword id="KW-1185">Reference proteome</keyword>
<keyword id="KW-0808">Transferase</keyword>
<comment type="function">
    <text evidence="1">Catalyzes the phosphorylation of the position 2 hydroxy group of 4-diphosphocytidyl-2C-methyl-D-erythritol.</text>
</comment>
<comment type="catalytic activity">
    <reaction evidence="1">
        <text>4-CDP-2-C-methyl-D-erythritol + ATP = 4-CDP-2-C-methyl-D-erythritol 2-phosphate + ADP + H(+)</text>
        <dbReference type="Rhea" id="RHEA:18437"/>
        <dbReference type="ChEBI" id="CHEBI:15378"/>
        <dbReference type="ChEBI" id="CHEBI:30616"/>
        <dbReference type="ChEBI" id="CHEBI:57823"/>
        <dbReference type="ChEBI" id="CHEBI:57919"/>
        <dbReference type="ChEBI" id="CHEBI:456216"/>
        <dbReference type="EC" id="2.7.1.148"/>
    </reaction>
</comment>
<comment type="pathway">
    <text evidence="1">Isoprenoid biosynthesis; isopentenyl diphosphate biosynthesis via DXP pathway; isopentenyl diphosphate from 1-deoxy-D-xylulose 5-phosphate: step 3/6.</text>
</comment>
<comment type="similarity">
    <text evidence="1">Belongs to the GHMP kinase family. IspE subfamily.</text>
</comment>
<name>ISPE_NOVAD</name>
<dbReference type="EC" id="2.7.1.148" evidence="1"/>
<dbReference type="EMBL" id="CP000248">
    <property type="protein sequence ID" value="ABD26222.1"/>
    <property type="molecule type" value="Genomic_DNA"/>
</dbReference>
<dbReference type="SMR" id="Q2G7F1"/>
<dbReference type="STRING" id="279238.Saro_1782"/>
<dbReference type="KEGG" id="nar:Saro_1782"/>
<dbReference type="eggNOG" id="COG1947">
    <property type="taxonomic scope" value="Bacteria"/>
</dbReference>
<dbReference type="HOGENOM" id="CLU_053057_1_0_5"/>
<dbReference type="UniPathway" id="UPA00056">
    <property type="reaction ID" value="UER00094"/>
</dbReference>
<dbReference type="Proteomes" id="UP000009134">
    <property type="component" value="Chromosome"/>
</dbReference>
<dbReference type="GO" id="GO:0050515">
    <property type="term" value="F:4-(cytidine 5'-diphospho)-2-C-methyl-D-erythritol kinase activity"/>
    <property type="evidence" value="ECO:0007669"/>
    <property type="project" value="UniProtKB-UniRule"/>
</dbReference>
<dbReference type="GO" id="GO:0005524">
    <property type="term" value="F:ATP binding"/>
    <property type="evidence" value="ECO:0007669"/>
    <property type="project" value="UniProtKB-UniRule"/>
</dbReference>
<dbReference type="GO" id="GO:0019288">
    <property type="term" value="P:isopentenyl diphosphate biosynthetic process, methylerythritol 4-phosphate pathway"/>
    <property type="evidence" value="ECO:0007669"/>
    <property type="project" value="UniProtKB-UniRule"/>
</dbReference>
<dbReference type="GO" id="GO:0016114">
    <property type="term" value="P:terpenoid biosynthetic process"/>
    <property type="evidence" value="ECO:0007669"/>
    <property type="project" value="InterPro"/>
</dbReference>
<dbReference type="Gene3D" id="3.30.230.10">
    <property type="match status" value="1"/>
</dbReference>
<dbReference type="Gene3D" id="3.30.70.890">
    <property type="entry name" value="GHMP kinase, C-terminal domain"/>
    <property type="match status" value="1"/>
</dbReference>
<dbReference type="HAMAP" id="MF_00061">
    <property type="entry name" value="IspE"/>
    <property type="match status" value="1"/>
</dbReference>
<dbReference type="InterPro" id="IPR013750">
    <property type="entry name" value="GHMP_kinase_C_dom"/>
</dbReference>
<dbReference type="InterPro" id="IPR036554">
    <property type="entry name" value="GHMP_kinase_C_sf"/>
</dbReference>
<dbReference type="InterPro" id="IPR006204">
    <property type="entry name" value="GHMP_kinase_N_dom"/>
</dbReference>
<dbReference type="InterPro" id="IPR004424">
    <property type="entry name" value="IspE"/>
</dbReference>
<dbReference type="InterPro" id="IPR020568">
    <property type="entry name" value="Ribosomal_Su5_D2-typ_SF"/>
</dbReference>
<dbReference type="InterPro" id="IPR014721">
    <property type="entry name" value="Ribsml_uS5_D2-typ_fold_subgr"/>
</dbReference>
<dbReference type="NCBIfam" id="NF011202">
    <property type="entry name" value="PRK14608.1"/>
    <property type="match status" value="1"/>
</dbReference>
<dbReference type="PANTHER" id="PTHR43527">
    <property type="entry name" value="4-DIPHOSPHOCYTIDYL-2-C-METHYL-D-ERYTHRITOL KINASE, CHLOROPLASTIC"/>
    <property type="match status" value="1"/>
</dbReference>
<dbReference type="PANTHER" id="PTHR43527:SF2">
    <property type="entry name" value="4-DIPHOSPHOCYTIDYL-2-C-METHYL-D-ERYTHRITOL KINASE, CHLOROPLASTIC"/>
    <property type="match status" value="1"/>
</dbReference>
<dbReference type="Pfam" id="PF08544">
    <property type="entry name" value="GHMP_kinases_C"/>
    <property type="match status" value="1"/>
</dbReference>
<dbReference type="Pfam" id="PF00288">
    <property type="entry name" value="GHMP_kinases_N"/>
    <property type="match status" value="1"/>
</dbReference>
<dbReference type="PIRSF" id="PIRSF010376">
    <property type="entry name" value="IspE"/>
    <property type="match status" value="1"/>
</dbReference>
<dbReference type="SUPFAM" id="SSF55060">
    <property type="entry name" value="GHMP Kinase, C-terminal domain"/>
    <property type="match status" value="1"/>
</dbReference>
<dbReference type="SUPFAM" id="SSF54211">
    <property type="entry name" value="Ribosomal protein S5 domain 2-like"/>
    <property type="match status" value="1"/>
</dbReference>
<feature type="chain" id="PRO_0000235110" description="4-diphosphocytidyl-2-C-methyl-D-erythritol kinase">
    <location>
        <begin position="1"/>
        <end position="285"/>
    </location>
</feature>
<feature type="active site" evidence="1">
    <location>
        <position position="28"/>
    </location>
</feature>
<feature type="active site" evidence="1">
    <location>
        <position position="148"/>
    </location>
</feature>
<feature type="binding site" evidence="1">
    <location>
        <begin position="109"/>
        <end position="119"/>
    </location>
    <ligand>
        <name>ATP</name>
        <dbReference type="ChEBI" id="CHEBI:30616"/>
    </ligand>
</feature>
<sequence>MQEASGLAPAPLPFQGRAMSLRETAYAKINLALHVRRRRDDGYHELETLFAFVDAGDELTAKPAPADSLRVFGEFGGALDDPFGNIVAKALGTLPHGEGWAVTLEKHLPVAAGLGGGSADAGAVFRMVERSHGLPADWHARAARLGADVPACVESAACIGRGTGTELEPIPNDLAGTPVLLVNPRIPLATGPVFKAWDGVDRGALEGATAREVAFAGRNDLEAPALSLVPEIGAVLVTLRQTGGWLTRMSGSGATCFALYDTPEQRDLAQAAMPPSWWTLGGALR</sequence>
<protein>
    <recommendedName>
        <fullName evidence="1">4-diphosphocytidyl-2-C-methyl-D-erythritol kinase</fullName>
        <shortName evidence="1">CMK</shortName>
        <ecNumber evidence="1">2.7.1.148</ecNumber>
    </recommendedName>
    <alternativeName>
        <fullName evidence="1">4-(cytidine-5'-diphospho)-2-C-methyl-D-erythritol kinase</fullName>
    </alternativeName>
</protein>